<reference key="1">
    <citation type="submission" date="2007-08" db="EMBL/GenBank/DDBJ databases">
        <title>Complete sequence of Roseiflexus castenholzii DSM 13941.</title>
        <authorList>
            <consortium name="US DOE Joint Genome Institute"/>
            <person name="Copeland A."/>
            <person name="Lucas S."/>
            <person name="Lapidus A."/>
            <person name="Barry K."/>
            <person name="Glavina del Rio T."/>
            <person name="Dalin E."/>
            <person name="Tice H."/>
            <person name="Pitluck S."/>
            <person name="Thompson L.S."/>
            <person name="Brettin T."/>
            <person name="Bruce D."/>
            <person name="Detter J.C."/>
            <person name="Han C."/>
            <person name="Tapia R."/>
            <person name="Schmutz J."/>
            <person name="Larimer F."/>
            <person name="Land M."/>
            <person name="Hauser L."/>
            <person name="Kyrpides N."/>
            <person name="Mikhailova N."/>
            <person name="Bryant D.A."/>
            <person name="Hanada S."/>
            <person name="Tsukatani Y."/>
            <person name="Richardson P."/>
        </authorList>
    </citation>
    <scope>NUCLEOTIDE SEQUENCE [LARGE SCALE GENOMIC DNA]</scope>
    <source>
        <strain>DSM 13941 / HLO8</strain>
    </source>
</reference>
<keyword id="KW-0030">Aminoacyl-tRNA synthetase</keyword>
<keyword id="KW-0067">ATP-binding</keyword>
<keyword id="KW-0963">Cytoplasm</keyword>
<keyword id="KW-0436">Ligase</keyword>
<keyword id="KW-0460">Magnesium</keyword>
<keyword id="KW-0479">Metal-binding</keyword>
<keyword id="KW-0547">Nucleotide-binding</keyword>
<keyword id="KW-0648">Protein biosynthesis</keyword>
<keyword id="KW-1185">Reference proteome</keyword>
<evidence type="ECO:0000255" key="1">
    <source>
        <dbReference type="HAMAP-Rule" id="MF_00252"/>
    </source>
</evidence>
<protein>
    <recommendedName>
        <fullName evidence="1">Lysine--tRNA ligase</fullName>
        <ecNumber evidence="1">6.1.1.6</ecNumber>
    </recommendedName>
    <alternativeName>
        <fullName evidence="1">Lysyl-tRNA synthetase</fullName>
        <shortName evidence="1">LysRS</shortName>
    </alternativeName>
</protein>
<feature type="chain" id="PRO_1000078506" description="Lysine--tRNA ligase">
    <location>
        <begin position="1"/>
        <end position="489"/>
    </location>
</feature>
<feature type="binding site" evidence="1">
    <location>
        <position position="399"/>
    </location>
    <ligand>
        <name>Mg(2+)</name>
        <dbReference type="ChEBI" id="CHEBI:18420"/>
        <label>1</label>
    </ligand>
</feature>
<feature type="binding site" evidence="1">
    <location>
        <position position="406"/>
    </location>
    <ligand>
        <name>Mg(2+)</name>
        <dbReference type="ChEBI" id="CHEBI:18420"/>
        <label>1</label>
    </ligand>
</feature>
<feature type="binding site" evidence="1">
    <location>
        <position position="406"/>
    </location>
    <ligand>
        <name>Mg(2+)</name>
        <dbReference type="ChEBI" id="CHEBI:18420"/>
        <label>2</label>
    </ligand>
</feature>
<comment type="catalytic activity">
    <reaction evidence="1">
        <text>tRNA(Lys) + L-lysine + ATP = L-lysyl-tRNA(Lys) + AMP + diphosphate</text>
        <dbReference type="Rhea" id="RHEA:20792"/>
        <dbReference type="Rhea" id="RHEA-COMP:9696"/>
        <dbReference type="Rhea" id="RHEA-COMP:9697"/>
        <dbReference type="ChEBI" id="CHEBI:30616"/>
        <dbReference type="ChEBI" id="CHEBI:32551"/>
        <dbReference type="ChEBI" id="CHEBI:33019"/>
        <dbReference type="ChEBI" id="CHEBI:78442"/>
        <dbReference type="ChEBI" id="CHEBI:78529"/>
        <dbReference type="ChEBI" id="CHEBI:456215"/>
        <dbReference type="EC" id="6.1.1.6"/>
    </reaction>
</comment>
<comment type="cofactor">
    <cofactor evidence="1">
        <name>Mg(2+)</name>
        <dbReference type="ChEBI" id="CHEBI:18420"/>
    </cofactor>
    <text evidence="1">Binds 3 Mg(2+) ions per subunit.</text>
</comment>
<comment type="subunit">
    <text evidence="1">Homodimer.</text>
</comment>
<comment type="subcellular location">
    <subcellularLocation>
        <location evidence="1">Cytoplasm</location>
    </subcellularLocation>
</comment>
<comment type="similarity">
    <text evidence="1">Belongs to the class-II aminoacyl-tRNA synthetase family.</text>
</comment>
<accession>A7NFC6</accession>
<organism>
    <name type="scientific">Roseiflexus castenholzii (strain DSM 13941 / HLO8)</name>
    <dbReference type="NCBI Taxonomy" id="383372"/>
    <lineage>
        <taxon>Bacteria</taxon>
        <taxon>Bacillati</taxon>
        <taxon>Chloroflexota</taxon>
        <taxon>Chloroflexia</taxon>
        <taxon>Chloroflexales</taxon>
        <taxon>Roseiflexineae</taxon>
        <taxon>Roseiflexaceae</taxon>
        <taxon>Roseiflexus</taxon>
    </lineage>
</organism>
<proteinExistence type="inferred from homology"/>
<sequence length="489" mass="55876">MELNELQQQRLAKLERLRAAGIDPYPPRAQRTHTIGEVLAGFDQLMDRGEQVTVAGRIVGARRVLGKLAFAHIEDESGRIQLWLSRGDLGDEWFDRFRDDLDTFDIVEASGTLRRTQRGEPSVFVTRMGVLAKSLNPPPEKWHGLSDIEERHRQRYLDLIVNPEVRDVFRTRATIVRTMRRFLDERGFLEVETPTLQPIYGGASARPFITHHNQLKQDLYLRIAVELYLKRLIVGGFERVYEISKVFRNEGVDRTHNPEFTMMECYQAYADYHDMMRLVEDLYRALALEVTGSTTIVFQGQTIDFGPAWRRVSIPAAIAERTGIDILELTELEPLQEAIRAAGLKVDLKPGWGRQVDELFSVYVQPALIQPTFVLDHPVALSPLAKRRPDQPLLVERFEPVVAGMEIGNAFTELNDPLDQEQRFLEQGRAYDAGDDEAQQMDVDFLNALMYGMPPTGGLGIGIDRTVMLFTDQPSIREVILFPHLRPRE</sequence>
<dbReference type="EC" id="6.1.1.6" evidence="1"/>
<dbReference type="EMBL" id="CP000804">
    <property type="protein sequence ID" value="ABU56148.1"/>
    <property type="molecule type" value="Genomic_DNA"/>
</dbReference>
<dbReference type="RefSeq" id="WP_011997554.1">
    <property type="nucleotide sequence ID" value="NC_009767.1"/>
</dbReference>
<dbReference type="SMR" id="A7NFC6"/>
<dbReference type="STRING" id="383372.Rcas_0009"/>
<dbReference type="KEGG" id="rca:Rcas_0009"/>
<dbReference type="eggNOG" id="COG1190">
    <property type="taxonomic scope" value="Bacteria"/>
</dbReference>
<dbReference type="HOGENOM" id="CLU_008255_6_0_0"/>
<dbReference type="OrthoDB" id="9802326at2"/>
<dbReference type="Proteomes" id="UP000000263">
    <property type="component" value="Chromosome"/>
</dbReference>
<dbReference type="GO" id="GO:0005829">
    <property type="term" value="C:cytosol"/>
    <property type="evidence" value="ECO:0007669"/>
    <property type="project" value="TreeGrafter"/>
</dbReference>
<dbReference type="GO" id="GO:0005524">
    <property type="term" value="F:ATP binding"/>
    <property type="evidence" value="ECO:0007669"/>
    <property type="project" value="UniProtKB-UniRule"/>
</dbReference>
<dbReference type="GO" id="GO:0004824">
    <property type="term" value="F:lysine-tRNA ligase activity"/>
    <property type="evidence" value="ECO:0007669"/>
    <property type="project" value="UniProtKB-UniRule"/>
</dbReference>
<dbReference type="GO" id="GO:0000287">
    <property type="term" value="F:magnesium ion binding"/>
    <property type="evidence" value="ECO:0007669"/>
    <property type="project" value="UniProtKB-UniRule"/>
</dbReference>
<dbReference type="GO" id="GO:0000049">
    <property type="term" value="F:tRNA binding"/>
    <property type="evidence" value="ECO:0007669"/>
    <property type="project" value="TreeGrafter"/>
</dbReference>
<dbReference type="GO" id="GO:0006430">
    <property type="term" value="P:lysyl-tRNA aminoacylation"/>
    <property type="evidence" value="ECO:0007669"/>
    <property type="project" value="UniProtKB-UniRule"/>
</dbReference>
<dbReference type="CDD" id="cd00775">
    <property type="entry name" value="LysRS_core"/>
    <property type="match status" value="1"/>
</dbReference>
<dbReference type="CDD" id="cd04322">
    <property type="entry name" value="LysRS_N"/>
    <property type="match status" value="1"/>
</dbReference>
<dbReference type="Gene3D" id="3.30.930.10">
    <property type="entry name" value="Bira Bifunctional Protein, Domain 2"/>
    <property type="match status" value="1"/>
</dbReference>
<dbReference type="Gene3D" id="2.40.50.140">
    <property type="entry name" value="Nucleic acid-binding proteins"/>
    <property type="match status" value="1"/>
</dbReference>
<dbReference type="HAMAP" id="MF_00252">
    <property type="entry name" value="Lys_tRNA_synth_class2"/>
    <property type="match status" value="1"/>
</dbReference>
<dbReference type="InterPro" id="IPR004364">
    <property type="entry name" value="Aa-tRNA-synt_II"/>
</dbReference>
<dbReference type="InterPro" id="IPR006195">
    <property type="entry name" value="aa-tRNA-synth_II"/>
</dbReference>
<dbReference type="InterPro" id="IPR045864">
    <property type="entry name" value="aa-tRNA-synth_II/BPL/LPL"/>
</dbReference>
<dbReference type="InterPro" id="IPR002313">
    <property type="entry name" value="Lys-tRNA-ligase_II"/>
</dbReference>
<dbReference type="InterPro" id="IPR044136">
    <property type="entry name" value="Lys-tRNA-ligase_II_N"/>
</dbReference>
<dbReference type="InterPro" id="IPR018149">
    <property type="entry name" value="Lys-tRNA-synth_II_C"/>
</dbReference>
<dbReference type="InterPro" id="IPR012340">
    <property type="entry name" value="NA-bd_OB-fold"/>
</dbReference>
<dbReference type="InterPro" id="IPR004365">
    <property type="entry name" value="NA-bd_OB_tRNA"/>
</dbReference>
<dbReference type="NCBIfam" id="TIGR00499">
    <property type="entry name" value="lysS_bact"/>
    <property type="match status" value="1"/>
</dbReference>
<dbReference type="NCBIfam" id="NF001756">
    <property type="entry name" value="PRK00484.1"/>
    <property type="match status" value="1"/>
</dbReference>
<dbReference type="PANTHER" id="PTHR42918:SF15">
    <property type="entry name" value="LYSINE--TRNA LIGASE, CHLOROPLASTIC_MITOCHONDRIAL"/>
    <property type="match status" value="1"/>
</dbReference>
<dbReference type="PANTHER" id="PTHR42918">
    <property type="entry name" value="LYSYL-TRNA SYNTHETASE"/>
    <property type="match status" value="1"/>
</dbReference>
<dbReference type="Pfam" id="PF00152">
    <property type="entry name" value="tRNA-synt_2"/>
    <property type="match status" value="1"/>
</dbReference>
<dbReference type="Pfam" id="PF01336">
    <property type="entry name" value="tRNA_anti-codon"/>
    <property type="match status" value="1"/>
</dbReference>
<dbReference type="PRINTS" id="PR00982">
    <property type="entry name" value="TRNASYNTHLYS"/>
</dbReference>
<dbReference type="SUPFAM" id="SSF55681">
    <property type="entry name" value="Class II aaRS and biotin synthetases"/>
    <property type="match status" value="1"/>
</dbReference>
<dbReference type="SUPFAM" id="SSF50249">
    <property type="entry name" value="Nucleic acid-binding proteins"/>
    <property type="match status" value="1"/>
</dbReference>
<dbReference type="PROSITE" id="PS50862">
    <property type="entry name" value="AA_TRNA_LIGASE_II"/>
    <property type="match status" value="1"/>
</dbReference>
<name>SYK_ROSCS</name>
<gene>
    <name evidence="1" type="primary">lysS</name>
    <name type="ordered locus">Rcas_0009</name>
</gene>